<accession>Q9PGT5</accession>
<organism>
    <name type="scientific">Xylella fastidiosa (strain 9a5c)</name>
    <dbReference type="NCBI Taxonomy" id="160492"/>
    <lineage>
        <taxon>Bacteria</taxon>
        <taxon>Pseudomonadati</taxon>
        <taxon>Pseudomonadota</taxon>
        <taxon>Gammaproteobacteria</taxon>
        <taxon>Lysobacterales</taxon>
        <taxon>Lysobacteraceae</taxon>
        <taxon>Xylella</taxon>
    </lineage>
</organism>
<reference key="1">
    <citation type="journal article" date="2000" name="Nature">
        <title>The genome sequence of the plant pathogen Xylella fastidiosa.</title>
        <authorList>
            <person name="Simpson A.J.G."/>
            <person name="Reinach F.C."/>
            <person name="Arruda P."/>
            <person name="Abreu F.A."/>
            <person name="Acencio M."/>
            <person name="Alvarenga R."/>
            <person name="Alves L.M.C."/>
            <person name="Araya J.E."/>
            <person name="Baia G.S."/>
            <person name="Baptista C.S."/>
            <person name="Barros M.H."/>
            <person name="Bonaccorsi E.D."/>
            <person name="Bordin S."/>
            <person name="Bove J.M."/>
            <person name="Briones M.R.S."/>
            <person name="Bueno M.R.P."/>
            <person name="Camargo A.A."/>
            <person name="Camargo L.E.A."/>
            <person name="Carraro D.M."/>
            <person name="Carrer H."/>
            <person name="Colauto N.B."/>
            <person name="Colombo C."/>
            <person name="Costa F.F."/>
            <person name="Costa M.C.R."/>
            <person name="Costa-Neto C.M."/>
            <person name="Coutinho L.L."/>
            <person name="Cristofani M."/>
            <person name="Dias-Neto E."/>
            <person name="Docena C."/>
            <person name="El-Dorry H."/>
            <person name="Facincani A.P."/>
            <person name="Ferreira A.J.S."/>
            <person name="Ferreira V.C.A."/>
            <person name="Ferro J.A."/>
            <person name="Fraga J.S."/>
            <person name="Franca S.C."/>
            <person name="Franco M.C."/>
            <person name="Frohme M."/>
            <person name="Furlan L.R."/>
            <person name="Garnier M."/>
            <person name="Goldman G.H."/>
            <person name="Goldman M.H.S."/>
            <person name="Gomes S.L."/>
            <person name="Gruber A."/>
            <person name="Ho P.L."/>
            <person name="Hoheisel J.D."/>
            <person name="Junqueira M.L."/>
            <person name="Kemper E.L."/>
            <person name="Kitajima J.P."/>
            <person name="Krieger J.E."/>
            <person name="Kuramae E.E."/>
            <person name="Laigret F."/>
            <person name="Lambais M.R."/>
            <person name="Leite L.C.C."/>
            <person name="Lemos E.G.M."/>
            <person name="Lemos M.V.F."/>
            <person name="Lopes S.A."/>
            <person name="Lopes C.R."/>
            <person name="Machado J.A."/>
            <person name="Machado M.A."/>
            <person name="Madeira A.M.B.N."/>
            <person name="Madeira H.M.F."/>
            <person name="Marino C.L."/>
            <person name="Marques M.V."/>
            <person name="Martins E.A.L."/>
            <person name="Martins E.M.F."/>
            <person name="Matsukuma A.Y."/>
            <person name="Menck C.F.M."/>
            <person name="Miracca E.C."/>
            <person name="Miyaki C.Y."/>
            <person name="Monteiro-Vitorello C.B."/>
            <person name="Moon D.H."/>
            <person name="Nagai M.A."/>
            <person name="Nascimento A.L.T.O."/>
            <person name="Netto L.E.S."/>
            <person name="Nhani A. Jr."/>
            <person name="Nobrega F.G."/>
            <person name="Nunes L.R."/>
            <person name="Oliveira M.A."/>
            <person name="de Oliveira M.C."/>
            <person name="de Oliveira R.C."/>
            <person name="Palmieri D.A."/>
            <person name="Paris A."/>
            <person name="Peixoto B.R."/>
            <person name="Pereira G.A.G."/>
            <person name="Pereira H.A. Jr."/>
            <person name="Pesquero J.B."/>
            <person name="Quaggio R.B."/>
            <person name="Roberto P.G."/>
            <person name="Rodrigues V."/>
            <person name="de Rosa A.J.M."/>
            <person name="de Rosa V.E. Jr."/>
            <person name="de Sa R.G."/>
            <person name="Santelli R.V."/>
            <person name="Sawasaki H.E."/>
            <person name="da Silva A.C.R."/>
            <person name="da Silva A.M."/>
            <person name="da Silva F.R."/>
            <person name="Silva W.A. Jr."/>
            <person name="da Silveira J.F."/>
            <person name="Silvestri M.L.Z."/>
            <person name="Siqueira W.J."/>
            <person name="de Souza A.A."/>
            <person name="de Souza A.P."/>
            <person name="Terenzi M.F."/>
            <person name="Truffi D."/>
            <person name="Tsai S.M."/>
            <person name="Tsuhako M.H."/>
            <person name="Vallada H."/>
            <person name="Van Sluys M.A."/>
            <person name="Verjovski-Almeida S."/>
            <person name="Vettore A.L."/>
            <person name="Zago M.A."/>
            <person name="Zatz M."/>
            <person name="Meidanis J."/>
            <person name="Setubal J.C."/>
        </authorList>
    </citation>
    <scope>NUCLEOTIDE SEQUENCE [LARGE SCALE GENOMIC DNA]</scope>
    <source>
        <strain>9a5c</strain>
    </source>
</reference>
<evidence type="ECO:0000255" key="1">
    <source>
        <dbReference type="HAMAP-Rule" id="MF_00134"/>
    </source>
</evidence>
<gene>
    <name evidence="1" type="primary">trpC</name>
    <name type="ordered locus">XF_0213</name>
</gene>
<feature type="chain" id="PRO_0000154269" description="Indole-3-glycerol phosphate synthase">
    <location>
        <begin position="1"/>
        <end position="264"/>
    </location>
</feature>
<proteinExistence type="inferred from homology"/>
<comment type="catalytic activity">
    <reaction evidence="1">
        <text>1-(2-carboxyphenylamino)-1-deoxy-D-ribulose 5-phosphate + H(+) = (1S,2R)-1-C-(indol-3-yl)glycerol 3-phosphate + CO2 + H2O</text>
        <dbReference type="Rhea" id="RHEA:23476"/>
        <dbReference type="ChEBI" id="CHEBI:15377"/>
        <dbReference type="ChEBI" id="CHEBI:15378"/>
        <dbReference type="ChEBI" id="CHEBI:16526"/>
        <dbReference type="ChEBI" id="CHEBI:58613"/>
        <dbReference type="ChEBI" id="CHEBI:58866"/>
        <dbReference type="EC" id="4.1.1.48"/>
    </reaction>
</comment>
<comment type="pathway">
    <text evidence="1">Amino-acid biosynthesis; L-tryptophan biosynthesis; L-tryptophan from chorismate: step 4/5.</text>
</comment>
<comment type="similarity">
    <text evidence="1">Belongs to the TrpC family.</text>
</comment>
<protein>
    <recommendedName>
        <fullName evidence="1">Indole-3-glycerol phosphate synthase</fullName>
        <shortName evidence="1">IGPS</shortName>
        <ecNumber evidence="1">4.1.1.48</ecNumber>
    </recommendedName>
</protein>
<sequence length="264" mass="28700">MSNILTKIIAWKVEEIAERLLHVSQAELVARCADLPTPRGFAGALQATIAHGDPAVIAEIKKASPSKGVLREDFRPAEIAISYELGGASCLSVLTDVHFFKGHDDYLSQARDACTLPVLRKDFTIDPYQVYEARVLGADCILLIVAALDDAQLVDLSGLALQLGMDVLVEVHDIDELERAIQISAPLIGINNRNLSTFNVSLETTLTMKGLVPRDRLLVSESGILTSADVQRLRAAGVNAFLVGEAFMRATEPGESLREMFFIT</sequence>
<dbReference type="EC" id="4.1.1.48" evidence="1"/>
<dbReference type="EMBL" id="AE003849">
    <property type="protein sequence ID" value="AAF83026.1"/>
    <property type="molecule type" value="Genomic_DNA"/>
</dbReference>
<dbReference type="PIR" id="A82833">
    <property type="entry name" value="A82833"/>
</dbReference>
<dbReference type="RefSeq" id="WP_010892754.1">
    <property type="nucleotide sequence ID" value="NC_002488.3"/>
</dbReference>
<dbReference type="SMR" id="Q9PGT5"/>
<dbReference type="STRING" id="160492.XF_0213"/>
<dbReference type="KEGG" id="xfa:XF_0213"/>
<dbReference type="eggNOG" id="COG0134">
    <property type="taxonomic scope" value="Bacteria"/>
</dbReference>
<dbReference type="HOGENOM" id="CLU_034247_2_0_6"/>
<dbReference type="UniPathway" id="UPA00035">
    <property type="reaction ID" value="UER00043"/>
</dbReference>
<dbReference type="Proteomes" id="UP000000812">
    <property type="component" value="Chromosome"/>
</dbReference>
<dbReference type="GO" id="GO:0004425">
    <property type="term" value="F:indole-3-glycerol-phosphate synthase activity"/>
    <property type="evidence" value="ECO:0007669"/>
    <property type="project" value="UniProtKB-UniRule"/>
</dbReference>
<dbReference type="GO" id="GO:0004640">
    <property type="term" value="F:phosphoribosylanthranilate isomerase activity"/>
    <property type="evidence" value="ECO:0007669"/>
    <property type="project" value="TreeGrafter"/>
</dbReference>
<dbReference type="GO" id="GO:0000162">
    <property type="term" value="P:L-tryptophan biosynthetic process"/>
    <property type="evidence" value="ECO:0007669"/>
    <property type="project" value="UniProtKB-UniRule"/>
</dbReference>
<dbReference type="CDD" id="cd00331">
    <property type="entry name" value="IGPS"/>
    <property type="match status" value="1"/>
</dbReference>
<dbReference type="FunFam" id="3.20.20.70:FF:000024">
    <property type="entry name" value="Indole-3-glycerol phosphate synthase"/>
    <property type="match status" value="1"/>
</dbReference>
<dbReference type="Gene3D" id="3.20.20.70">
    <property type="entry name" value="Aldolase class I"/>
    <property type="match status" value="1"/>
</dbReference>
<dbReference type="HAMAP" id="MF_00134_B">
    <property type="entry name" value="IGPS_B"/>
    <property type="match status" value="1"/>
</dbReference>
<dbReference type="InterPro" id="IPR013785">
    <property type="entry name" value="Aldolase_TIM"/>
</dbReference>
<dbReference type="InterPro" id="IPR045186">
    <property type="entry name" value="Indole-3-glycerol_P_synth"/>
</dbReference>
<dbReference type="InterPro" id="IPR013798">
    <property type="entry name" value="Indole-3-glycerol_P_synth_dom"/>
</dbReference>
<dbReference type="InterPro" id="IPR001468">
    <property type="entry name" value="Indole-3-GlycerolPSynthase_CS"/>
</dbReference>
<dbReference type="InterPro" id="IPR011060">
    <property type="entry name" value="RibuloseP-bd_barrel"/>
</dbReference>
<dbReference type="NCBIfam" id="NF001370">
    <property type="entry name" value="PRK00278.1-2"/>
    <property type="match status" value="1"/>
</dbReference>
<dbReference type="NCBIfam" id="NF001373">
    <property type="entry name" value="PRK00278.1-6"/>
    <property type="match status" value="1"/>
</dbReference>
<dbReference type="NCBIfam" id="NF001377">
    <property type="entry name" value="PRK00278.2-4"/>
    <property type="match status" value="1"/>
</dbReference>
<dbReference type="PANTHER" id="PTHR22854:SF2">
    <property type="entry name" value="INDOLE-3-GLYCEROL-PHOSPHATE SYNTHASE"/>
    <property type="match status" value="1"/>
</dbReference>
<dbReference type="PANTHER" id="PTHR22854">
    <property type="entry name" value="TRYPTOPHAN BIOSYNTHESIS PROTEIN"/>
    <property type="match status" value="1"/>
</dbReference>
<dbReference type="Pfam" id="PF00218">
    <property type="entry name" value="IGPS"/>
    <property type="match status" value="1"/>
</dbReference>
<dbReference type="SUPFAM" id="SSF51366">
    <property type="entry name" value="Ribulose-phoshate binding barrel"/>
    <property type="match status" value="1"/>
</dbReference>
<dbReference type="PROSITE" id="PS00614">
    <property type="entry name" value="IGPS"/>
    <property type="match status" value="1"/>
</dbReference>
<keyword id="KW-0028">Amino-acid biosynthesis</keyword>
<keyword id="KW-0057">Aromatic amino acid biosynthesis</keyword>
<keyword id="KW-0210">Decarboxylase</keyword>
<keyword id="KW-0456">Lyase</keyword>
<keyword id="KW-0822">Tryptophan biosynthesis</keyword>
<name>TRPC_XYLFA</name>